<keyword id="KW-0165">Cleavage on pair of basic residues</keyword>
<keyword id="KW-1015">Disulfide bond</keyword>
<keyword id="KW-0325">Glycoprotein</keyword>
<keyword id="KW-0339">Growth factor</keyword>
<keyword id="KW-0964">Secreted</keyword>
<keyword id="KW-0732">Signal</keyword>
<proteinExistence type="inferred from homology"/>
<evidence type="ECO:0000250" key="1">
    <source>
        <dbReference type="UniProtKB" id="P21237"/>
    </source>
</evidence>
<evidence type="ECO:0000250" key="2">
    <source>
        <dbReference type="UniProtKB" id="P23560"/>
    </source>
</evidence>
<evidence type="ECO:0000255" key="3"/>
<evidence type="ECO:0000305" key="4"/>
<feature type="signal peptide" evidence="3">
    <location>
        <begin position="1"/>
        <end position="18"/>
    </location>
</feature>
<feature type="chain" id="PRO_0000447526" description="Neurotrophic factor BDNF precursor form">
    <location>
        <begin position="19"/>
        <end position="247"/>
    </location>
</feature>
<feature type="propeptide" id="PRO_0000042896" evidence="1">
    <location>
        <begin position="19"/>
        <end position="128"/>
    </location>
</feature>
<feature type="chain" id="PRO_0000042897" description="Neurotrophic factor BDNF">
    <location>
        <begin position="129"/>
        <end position="247"/>
    </location>
</feature>
<feature type="site" description="Cleavage; by MBTPS1" evidence="2">
    <location>
        <begin position="57"/>
        <end position="58"/>
    </location>
</feature>
<feature type="glycosylation site" description="N-linked (GlcNAc...) asparagine" evidence="3">
    <location>
        <position position="121"/>
    </location>
</feature>
<feature type="disulfide bond" evidence="2">
    <location>
        <begin position="141"/>
        <end position="208"/>
    </location>
</feature>
<feature type="disulfide bond" evidence="2">
    <location>
        <begin position="186"/>
        <end position="237"/>
    </location>
</feature>
<feature type="disulfide bond" evidence="2">
    <location>
        <begin position="196"/>
        <end position="239"/>
    </location>
</feature>
<organism>
    <name type="scientific">Ailurus fulgens</name>
    <name type="common">Himalayan red panda</name>
    <dbReference type="NCBI Taxonomy" id="9649"/>
    <lineage>
        <taxon>Eukaryota</taxon>
        <taxon>Metazoa</taxon>
        <taxon>Chordata</taxon>
        <taxon>Craniata</taxon>
        <taxon>Vertebrata</taxon>
        <taxon>Euteleostomi</taxon>
        <taxon>Mammalia</taxon>
        <taxon>Eutheria</taxon>
        <taxon>Laurasiatheria</taxon>
        <taxon>Carnivora</taxon>
        <taxon>Caniformia</taxon>
        <taxon>Musteloidea</taxon>
        <taxon>Ailuridae</taxon>
        <taxon>Ailurus</taxon>
    </lineage>
</organism>
<dbReference type="EMBL" id="U56639">
    <property type="protein sequence ID" value="AAD10843.1"/>
    <property type="molecule type" value="Genomic_DNA"/>
</dbReference>
<dbReference type="SMR" id="O97759"/>
<dbReference type="GlyCosmos" id="O97759">
    <property type="glycosylation" value="1 site, No reported glycans"/>
</dbReference>
<dbReference type="GO" id="GO:0030424">
    <property type="term" value="C:axon"/>
    <property type="evidence" value="ECO:0007669"/>
    <property type="project" value="TreeGrafter"/>
</dbReference>
<dbReference type="GO" id="GO:0030425">
    <property type="term" value="C:dendrite"/>
    <property type="evidence" value="ECO:0007669"/>
    <property type="project" value="TreeGrafter"/>
</dbReference>
<dbReference type="GO" id="GO:0005615">
    <property type="term" value="C:extracellular space"/>
    <property type="evidence" value="ECO:0007669"/>
    <property type="project" value="TreeGrafter"/>
</dbReference>
<dbReference type="GO" id="GO:0008021">
    <property type="term" value="C:synaptic vesicle"/>
    <property type="evidence" value="ECO:0007669"/>
    <property type="project" value="TreeGrafter"/>
</dbReference>
<dbReference type="GO" id="GO:0008083">
    <property type="term" value="F:growth factor activity"/>
    <property type="evidence" value="ECO:0007669"/>
    <property type="project" value="UniProtKB-KW"/>
</dbReference>
<dbReference type="GO" id="GO:0005163">
    <property type="term" value="F:nerve growth factor receptor binding"/>
    <property type="evidence" value="ECO:0007669"/>
    <property type="project" value="TreeGrafter"/>
</dbReference>
<dbReference type="GO" id="GO:0007169">
    <property type="term" value="P:cell surface receptor protein tyrosine kinase signaling pathway"/>
    <property type="evidence" value="ECO:0007669"/>
    <property type="project" value="TreeGrafter"/>
</dbReference>
<dbReference type="GO" id="GO:0050804">
    <property type="term" value="P:modulation of chemical synaptic transmission"/>
    <property type="evidence" value="ECO:0007669"/>
    <property type="project" value="TreeGrafter"/>
</dbReference>
<dbReference type="GO" id="GO:0043524">
    <property type="term" value="P:negative regulation of neuron apoptotic process"/>
    <property type="evidence" value="ECO:0007669"/>
    <property type="project" value="TreeGrafter"/>
</dbReference>
<dbReference type="GO" id="GO:0021675">
    <property type="term" value="P:nerve development"/>
    <property type="evidence" value="ECO:0007669"/>
    <property type="project" value="TreeGrafter"/>
</dbReference>
<dbReference type="GO" id="GO:0038180">
    <property type="term" value="P:nerve growth factor signaling pathway"/>
    <property type="evidence" value="ECO:0007669"/>
    <property type="project" value="TreeGrafter"/>
</dbReference>
<dbReference type="GO" id="GO:0048812">
    <property type="term" value="P:neuron projection morphogenesis"/>
    <property type="evidence" value="ECO:0007669"/>
    <property type="project" value="TreeGrafter"/>
</dbReference>
<dbReference type="FunFam" id="2.10.90.10:FF:000002">
    <property type="entry name" value="Brain-derived neurotrophic factor"/>
    <property type="match status" value="1"/>
</dbReference>
<dbReference type="Gene3D" id="2.10.90.10">
    <property type="entry name" value="Cystine-knot cytokines"/>
    <property type="match status" value="1"/>
</dbReference>
<dbReference type="InterPro" id="IPR020430">
    <property type="entry name" value="Brain-der_neurotrophic_factor"/>
</dbReference>
<dbReference type="InterPro" id="IPR029034">
    <property type="entry name" value="Cystine-knot_cytokine"/>
</dbReference>
<dbReference type="InterPro" id="IPR020408">
    <property type="entry name" value="Nerve_growth_factor-like"/>
</dbReference>
<dbReference type="InterPro" id="IPR002072">
    <property type="entry name" value="Nerve_growth_factor-rel"/>
</dbReference>
<dbReference type="InterPro" id="IPR019846">
    <property type="entry name" value="Nerve_growth_factor_CS"/>
</dbReference>
<dbReference type="PANTHER" id="PTHR11589:SF3">
    <property type="entry name" value="BRAIN-DERIVED NEUROTROPHIC FACTOR"/>
    <property type="match status" value="1"/>
</dbReference>
<dbReference type="PANTHER" id="PTHR11589">
    <property type="entry name" value="NERVE GROWTH FACTOR NGF -RELATED"/>
    <property type="match status" value="1"/>
</dbReference>
<dbReference type="Pfam" id="PF00243">
    <property type="entry name" value="NGF"/>
    <property type="match status" value="1"/>
</dbReference>
<dbReference type="PIRSF" id="PIRSF001789">
    <property type="entry name" value="NGF"/>
    <property type="match status" value="1"/>
</dbReference>
<dbReference type="PRINTS" id="PR01912">
    <property type="entry name" value="BDNFACTOR"/>
</dbReference>
<dbReference type="PRINTS" id="PR00268">
    <property type="entry name" value="NGF"/>
</dbReference>
<dbReference type="SMART" id="SM00140">
    <property type="entry name" value="NGF"/>
    <property type="match status" value="1"/>
</dbReference>
<dbReference type="SUPFAM" id="SSF57501">
    <property type="entry name" value="Cystine-knot cytokines"/>
    <property type="match status" value="1"/>
</dbReference>
<dbReference type="PROSITE" id="PS00248">
    <property type="entry name" value="NGF_1"/>
    <property type="match status" value="1"/>
</dbReference>
<dbReference type="PROSITE" id="PS50270">
    <property type="entry name" value="NGF_2"/>
    <property type="match status" value="1"/>
</dbReference>
<name>BDNF_AILFU</name>
<accession>O97759</accession>
<comment type="function">
    <text evidence="1 2">Important signaling molecule that activates signaling cascades downstream of NTRK2 (By similarity). During development, promotes the survival and differentiation of selected neuronal populations of the peripheral and central nervous systems. Participates in axonal growth, pathfinding and in the modulation of dendritic growth and morphology. Major regulator of synaptic transmission and plasticity at adult synapses in many regions of the CNS. The versatility of BDNF is emphasized by its contribution to a range of adaptive neuronal responses including long-term potentiation (LTP), long-term depression (LTD), certain forms of short-term synaptic plasticity, as well as homeostatic regulation of intrinsic neuronal excitability (By similarity).</text>
</comment>
<comment type="function">
    <molecule>Neurotrophic factor BDNF precursor form</molecule>
    <text evidence="1">Important signaling molecule that activates signaling cascades downstream of NTRK2. Activates signaling cascades via the heterodimeric receptor formed by NGFR and SORCS2. Signaling via NGFR and SORCS2 plays a role in synaptic plasticity and long-term depression (LTD). Binding to NGFR and SORCS2 promotes neuronal apoptosis. Promotes neuronal growth cone collapse.</text>
</comment>
<comment type="subunit">
    <text evidence="1 2">Monomers and homodimers (By similarity). Binds to NTRK2/TRKB. Can form heterodimers with other neurotrophin family members, such as NTF3 and NTF4 (in vitro), but the physiological relevance of this is not clear (By similarity). BDNF precursor form: interacts with the heterodimer formed by NGFR and SORCS2. Mature BDNF has much lower affinity for the heterodimer formed by NGFR and SORCS2 (By similarity).</text>
</comment>
<comment type="subcellular location">
    <subcellularLocation>
        <location evidence="2">Secreted</location>
    </subcellularLocation>
</comment>
<comment type="subcellular location">
    <molecule>Neurotrophic factor BDNF precursor form</molecule>
    <subcellularLocation>
        <location evidence="2">Secreted</location>
    </subcellularLocation>
    <text evidence="2">A proportion of BDNF is secreted as immature precursor (proBDNF).</text>
</comment>
<comment type="PTM">
    <molecule>Neurotrophic factor BDNF precursor form</molecule>
    <text evidence="2">N-glycosylated and glycosulfated, contrary to mature BDNF.</text>
</comment>
<comment type="PTM">
    <text evidence="2">Mature BDNF is produced by proteolytic removal of the propeptide, catalyzed by a FURIN family member. In addition, the precursor form is proteolytically cleaved within the propeptide, but this is not an obligatory intermediate for the production of mature BDNF. Can be converted into mature BDNF by plasmin (PLG).</text>
</comment>
<comment type="similarity">
    <text evidence="4">Belongs to the NGF-beta family.</text>
</comment>
<sequence>MTILFLTMVISYFGCMKAAPMKEANVRGQGSLAYTGVRTHGTLESMNGPKAGSRGLTSLADTFEHVIEELLDEDQKVRPNEENNKDADLYTSRVMLSSQVPLEPPLLFLLEEYKNYLDAANMSMRVRRHSDPARRGELSVCDSISEWVTAADKKTAVDMSGGTVTVLEKVPVSKGQLKQYFYETKCNPMGYTKEGCRGIDKRHWNSQCRTTQSYVRALTMDSKKRIGWRFIRIDTSCVCTLTIKRGR</sequence>
<protein>
    <recommendedName>
        <fullName evidence="4">Neurotrophic factor BDNF precursor form</fullName>
        <shortName>proBDNF</shortName>
    </recommendedName>
    <alternativeName>
        <fullName>Brain-derived neurotrophic factor</fullName>
    </alternativeName>
    <component>
        <recommendedName>
            <fullName>Neurotrophic factor BDNF</fullName>
        </recommendedName>
    </component>
</protein>
<gene>
    <name type="primary">BDNF</name>
</gene>
<reference key="1">
    <citation type="submission" date="1996-04" db="EMBL/GenBank/DDBJ databases">
        <title>Giant panda (GP) and lesser panda (LP) BDNF gene sequences and their deduced amino acid sequences.</title>
        <authorList>
            <person name="Feng L."/>
        </authorList>
    </citation>
    <scope>NUCLEOTIDE SEQUENCE [GENOMIC DNA]</scope>
</reference>